<organism>
    <name type="scientific">Neisseria meningitidis serogroup C</name>
    <dbReference type="NCBI Taxonomy" id="135720"/>
    <lineage>
        <taxon>Bacteria</taxon>
        <taxon>Pseudomonadati</taxon>
        <taxon>Pseudomonadota</taxon>
        <taxon>Betaproteobacteria</taxon>
        <taxon>Neisseriales</taxon>
        <taxon>Neisseriaceae</taxon>
        <taxon>Neisseria</taxon>
    </lineage>
</organism>
<gene>
    <name type="primary">frpA</name>
</gene>
<sequence length="1115" mass="122178">MTSANFNINGFGDVKLTPYSPLLGYKAWDSFIGSIQSLSDLIYNVDNNRNKMEITVNNAIQAADSFLSSIGRDNKITNTASLLASLDNIFLNLRNVSRDIRETGKFKPNDIQQAIGDIFIAAGDGLQYIKQQTEAMAQSKFLPTKLKTGLNDVLNSRMLKSSTVLQHELNYLGFKIKDYGNERLGESIMNIDDFTPSKIANFFADPDTYSNVLEEVSRFIYSLVPDDANPWKGGEDYIGRGISEWGELLEKWYKQDFLPYLEKEWDQFPKFEDWLPEFPEWAREWLKLDPKRSGKYHVYDPLALDLDGDGIETVAAKGFAGALFDHRNQGIRTATGWVSADDGLLVRDLNGNGIIDNGAELFGDNTKLADGSFAKHGYAALAELDSNGDNIINAADAAFQTLRVWQDLNQDGISQANELRTLEELGIQSLDLAYKDVNKNLGNGNTLAQQGSYTKTDGTTAKMGDLLLAADNLHSRFKDKVELTAEQAKAANLAGIGRLRDLREAAALSGDLANMLKAYSAAETKEAQLALLDNLIHKWAETDSNWGKKSPMRLSTDWTQTANEGIALTPSQVAQLKKNALVSLSDKAKAAIDAARDRIAVLDAYTGQDSSTLYYMSEEDALNIVKVTNDTYDHLAKNIYQNLLFQTRLQPYLNQISFKMENDTFTLDFSGLVQAFNHVKETNPQKAFVDLAEMLAYGELRSWYEGRRLMADYVEEAKKAGKFEDYQKVLGQETVALLAKTSGTQADDILQNVGFGHNKNVSLYGNDGNDTLIGGAGNDYLEGGSGSDTYVFGKGFGQDTVYNYDYATGRKDIIRFTDGITADMLTFTREGNHLLIKAKDDSGQVTVQSYFQNDGSGAYRIDEIHFDNGKVLDVATVKELVQQSTDGSDRLYAYQSGSTLNGGLGDDYLYGADGNDLLNGDAGNDSIYSGNGNDTLDGGEGNDALYGYNGNDALNGGEGNDHLNGEDGNDTLIGGAGNDYLEGGSGSDTYVFGEGFGQDTVYNYHVDKNSDTMHFKGFKAADVHFIRSGSDLVLSASEQDNVRISGFFYGENHRVDTFVFDDAAISNPDFAKYINAGNNLVQSMSVFGSNTAATGGNVDANIQSVQQPLLVTPSA</sequence>
<protein>
    <recommendedName>
        <fullName>Iron-regulated protein FrpA</fullName>
    </recommendedName>
</protein>
<comment type="function">
    <text>May participate in the pathogenesis of meningococcal disease.</text>
</comment>
<comment type="subcellular location">
    <subcellularLocation>
        <location>Cell outer membrane</location>
        <topology>Peripheral membrane protein</topology>
    </subcellularLocation>
    <subcellularLocation>
        <location>Secreted</location>
    </subcellularLocation>
</comment>
<comment type="domain">
    <text>The Gly-rich region is probably involved in binding calcium, which is required for target cell-binding or cytolytic activity.</text>
</comment>
<comment type="similarity">
    <text evidence="1">Belongs to the RTX prokaryotic toxin (TC 1.C.11) family.</text>
</comment>
<evidence type="ECO:0000305" key="1"/>
<proteinExistence type="inferred from homology"/>
<reference key="1">
    <citation type="journal article" date="1993" name="J. Bacteriol.">
        <title>Neisseria meningitidis produces iron-regulated proteins related to the RTX family of exoproteins.</title>
        <authorList>
            <person name="Thompson S.A."/>
            <person name="Wang L.L."/>
            <person name="West A."/>
            <person name="Sparling P.F."/>
        </authorList>
    </citation>
    <scope>NUCLEOTIDE SEQUENCE [GENOMIC DNA]</scope>
    <source>
        <strain>FAM20 / Serogroup C</strain>
    </source>
</reference>
<accession>P55126</accession>
<keyword id="KW-0106">Calcium</keyword>
<keyword id="KW-0998">Cell outer membrane</keyword>
<keyword id="KW-0472">Membrane</keyword>
<keyword id="KW-0677">Repeat</keyword>
<keyword id="KW-0964">Secreted</keyword>
<keyword id="KW-0800">Toxin</keyword>
<keyword id="KW-0843">Virulence</keyword>
<feature type="chain" id="PRO_0000196243" description="Iron-regulated protein FrpA">
    <location>
        <begin position="1"/>
        <end position="1115"/>
    </location>
</feature>
<feature type="repeat" description="Hemolysin-type calcium-binding 1">
    <location>
        <begin position="755"/>
        <end position="772"/>
    </location>
</feature>
<feature type="repeat" description="Hemolysin-type calcium-binding 2">
    <location>
        <begin position="773"/>
        <end position="790"/>
    </location>
</feature>
<feature type="repeat" description="Hemolysin-type calcium-binding 3">
    <location>
        <begin position="901"/>
        <end position="918"/>
    </location>
</feature>
<feature type="repeat" description="Hemolysin-type calcium-binding 4">
    <location>
        <begin position="919"/>
        <end position="936"/>
    </location>
</feature>
<feature type="repeat" description="Hemolysin-type calcium-binding 5">
    <location>
        <begin position="937"/>
        <end position="954"/>
    </location>
</feature>
<feature type="repeat" description="Hemolysin-type calcium-binding 6">
    <location>
        <begin position="955"/>
        <end position="972"/>
    </location>
</feature>
<feature type="repeat" description="Hemolysin-type calcium-binding 7">
    <location>
        <begin position="973"/>
        <end position="990"/>
    </location>
</feature>
<name>FRPA_NEIMC</name>
<dbReference type="EMBL" id="L06302">
    <property type="protein sequence ID" value="AAA25454.1"/>
    <property type="molecule type" value="Genomic_DNA"/>
</dbReference>
<dbReference type="PIR" id="A47058">
    <property type="entry name" value="A47058"/>
</dbReference>
<dbReference type="SMR" id="P55126"/>
<dbReference type="GO" id="GO:0009279">
    <property type="term" value="C:cell outer membrane"/>
    <property type="evidence" value="ECO:0007669"/>
    <property type="project" value="UniProtKB-SubCell"/>
</dbReference>
<dbReference type="GO" id="GO:0005576">
    <property type="term" value="C:extracellular region"/>
    <property type="evidence" value="ECO:0007669"/>
    <property type="project" value="UniProtKB-SubCell"/>
</dbReference>
<dbReference type="GO" id="GO:0005509">
    <property type="term" value="F:calcium ion binding"/>
    <property type="evidence" value="ECO:0007669"/>
    <property type="project" value="InterPro"/>
</dbReference>
<dbReference type="GO" id="GO:0090729">
    <property type="term" value="F:toxin activity"/>
    <property type="evidence" value="ECO:0007669"/>
    <property type="project" value="UniProtKB-KW"/>
</dbReference>
<dbReference type="Gene3D" id="2.150.10.10">
    <property type="entry name" value="Serralysin-like metalloprotease, C-terminal"/>
    <property type="match status" value="3"/>
</dbReference>
<dbReference type="InterPro" id="IPR010566">
    <property type="entry name" value="Haemolys_ca-bd"/>
</dbReference>
<dbReference type="InterPro" id="IPR018511">
    <property type="entry name" value="Hemolysin-typ_Ca-bd_CS"/>
</dbReference>
<dbReference type="InterPro" id="IPR001343">
    <property type="entry name" value="Hemolysn_Ca-bd"/>
</dbReference>
<dbReference type="InterPro" id="IPR050557">
    <property type="entry name" value="RTX_toxin/Mannuronan_C5-epim"/>
</dbReference>
<dbReference type="InterPro" id="IPR003995">
    <property type="entry name" value="RTX_toxin_determinant-A"/>
</dbReference>
<dbReference type="InterPro" id="IPR011049">
    <property type="entry name" value="Serralysin-like_metalloprot_C"/>
</dbReference>
<dbReference type="PANTHER" id="PTHR38340">
    <property type="entry name" value="S-LAYER PROTEIN"/>
    <property type="match status" value="1"/>
</dbReference>
<dbReference type="PANTHER" id="PTHR38340:SF1">
    <property type="entry name" value="S-LAYER PROTEIN"/>
    <property type="match status" value="1"/>
</dbReference>
<dbReference type="Pfam" id="PF06594">
    <property type="entry name" value="HCBP_related"/>
    <property type="match status" value="2"/>
</dbReference>
<dbReference type="Pfam" id="PF00353">
    <property type="entry name" value="HemolysinCabind"/>
    <property type="match status" value="3"/>
</dbReference>
<dbReference type="PRINTS" id="PR00313">
    <property type="entry name" value="CABNDNGRPT"/>
</dbReference>
<dbReference type="PRINTS" id="PR01488">
    <property type="entry name" value="RTXTOXINA"/>
</dbReference>
<dbReference type="SUPFAM" id="SSF51120">
    <property type="entry name" value="beta-Roll"/>
    <property type="match status" value="2"/>
</dbReference>
<dbReference type="PROSITE" id="PS00330">
    <property type="entry name" value="HEMOLYSIN_CALCIUM"/>
    <property type="match status" value="5"/>
</dbReference>